<proteinExistence type="inferred from homology"/>
<gene>
    <name type="primary">PA</name>
</gene>
<reference key="1">
    <citation type="submission" date="2006-03" db="EMBL/GenBank/DDBJ databases">
        <title>The NIAID influenza genome sequencing project.</title>
        <authorList>
            <person name="Ghedin E."/>
            <person name="Spiro D."/>
            <person name="Sengamalay N."/>
            <person name="Zaborsky J."/>
            <person name="Feldblyum T."/>
            <person name="Subbu V."/>
            <person name="Sparenborg J."/>
            <person name="Groveman L."/>
            <person name="Halpin R."/>
            <person name="Shumway M."/>
            <person name="Sitz J."/>
            <person name="Katzel D."/>
            <person name="Koo H."/>
            <person name="Salzberg S.L."/>
            <person name="Jennings L."/>
            <person name="Smit M."/>
            <person name="Wells V."/>
            <person name="Bao Y."/>
            <person name="Bolotov P."/>
            <person name="Dernovoy D."/>
            <person name="Kiryutin B."/>
            <person name="Lipman D.J."/>
            <person name="Tatusova T."/>
        </authorList>
    </citation>
    <scope>NUCLEOTIDE SEQUENCE [GENOMIC RNA]</scope>
</reference>
<reference key="2">
    <citation type="submission" date="2006-03" db="EMBL/GenBank/DDBJ databases">
        <authorList>
            <consortium name="The NIAID Influenza Genome Sequencing Consortium"/>
        </authorList>
    </citation>
    <scope>NUCLEOTIDE SEQUENCE [GENOMIC RNA]</scope>
</reference>
<comment type="function">
    <text evidence="1 4">Plays a major role in the shutoff of the host protein expression by cleaving mRNAs probably via an endonuclease activity. This host shutoff allows the virus to escape from the host antiviral response (By similarity). Hijacks host RNA splicing machinery to selectively target host RNAs containing introns for destruction. This may explain the preferential degradation of RNAs that have undergone co- or post-transcriptional processing (By similarity).</text>
</comment>
<comment type="subcellular location">
    <subcellularLocation>
        <location evidence="4">Host cytoplasm</location>
    </subcellularLocation>
    <subcellularLocation>
        <location evidence="4">Host nucleus</location>
    </subcellularLocation>
</comment>
<comment type="alternative products">
    <event type="ribosomal frameshifting"/>
    <isoform>
        <id>P0DJT6-1</id>
        <name>PA-X</name>
        <sequence type="displayed"/>
    </isoform>
    <isoform>
        <id>Q289M0-1</id>
        <name>PA</name>
        <sequence type="external"/>
    </isoform>
</comment>
<comment type="domain">
    <text evidence="1 4">The probable endonuclease active site in the N-terminus and the basic amino acid cluster in the C-terminus are important for the shutoff activity. The C-terminus acts as a nuclear localization signal (By similarity). The C-terminus is recruited to host protein complexes involved in nuclear Pol II RNA processing (By similarity).</text>
</comment>
<comment type="similarity">
    <text evidence="5">Belongs to the influenza viruses PA-X family.</text>
</comment>
<sequence length="252" mass="29411">MEDFVRQCFNPMIVELAEKAMKEYGEDLKIETNKFAAICTHLEVCFMYSDFHFINEQGESIIVEPEDPNALLKHRFEIIEGRDRTMAWTVVNSICNTTGAEKPKFLPDLYDYKENRFIEIGVTRREVHIYYLEKANKIKSEKTHIHIFSFTGEEMATKADYTLDEESRARIKTRLFTIRQEMASRGLWDSFVSPKEAKKQLKKDLKSQGQCAGSLTKAFRRTSPALRILEPMWMDLNRTATLRASFLKCPKK</sequence>
<organism>
    <name type="scientific">Influenza A virus (strain A/New Zealand:South Canterbury/35/2000 H1N1)</name>
    <dbReference type="NCBI Taxonomy" id="363066"/>
    <lineage>
        <taxon>Viruses</taxon>
        <taxon>Riboviria</taxon>
        <taxon>Orthornavirae</taxon>
        <taxon>Negarnaviricota</taxon>
        <taxon>Polyploviricotina</taxon>
        <taxon>Insthoviricetes</taxon>
        <taxon>Articulavirales</taxon>
        <taxon>Orthomyxoviridae</taxon>
        <taxon>Alphainfluenzavirus</taxon>
        <taxon>Alphainfluenzavirus influenzae</taxon>
        <taxon>Influenza A virus</taxon>
    </lineage>
</organism>
<evidence type="ECO:0000250" key="1">
    <source>
        <dbReference type="UniProtKB" id="P0CK64"/>
    </source>
</evidence>
<evidence type="ECO:0000250" key="2">
    <source>
        <dbReference type="UniProtKB" id="P0CK68"/>
    </source>
</evidence>
<evidence type="ECO:0000250" key="3">
    <source>
        <dbReference type="UniProtKB" id="P0DJW8"/>
    </source>
</evidence>
<evidence type="ECO:0000250" key="4">
    <source>
        <dbReference type="UniProtKB" id="P0DXO5"/>
    </source>
</evidence>
<evidence type="ECO:0000305" key="5"/>
<protein>
    <recommendedName>
        <fullName>Protein PA-X</fullName>
    </recommendedName>
</protein>
<keyword id="KW-1132">Decay of host mRNAs by virus</keyword>
<keyword id="KW-1262">Eukaryotic host gene expression shutoff by virus</keyword>
<keyword id="KW-1035">Host cytoplasm</keyword>
<keyword id="KW-1190">Host gene expression shutoff by virus</keyword>
<keyword id="KW-1192">Host mRNA suppression by virus</keyword>
<keyword id="KW-1048">Host nucleus</keyword>
<keyword id="KW-0945">Host-virus interaction</keyword>
<keyword id="KW-0688">Ribosomal frameshifting</keyword>
<feature type="chain" id="PRO_0000419399" description="Protein PA-X">
    <location>
        <begin position="1"/>
        <end position="252"/>
    </location>
</feature>
<feature type="active site" evidence="2">
    <location>
        <position position="80"/>
    </location>
</feature>
<feature type="active site" evidence="2">
    <location>
        <position position="108"/>
    </location>
</feature>
<feature type="site" description="Important for efficient shutoff activity and nuclear localization" evidence="4">
    <location>
        <position position="195"/>
    </location>
</feature>
<feature type="site" description="Important for efficient shutoff activity and nuclear localization" evidence="4">
    <location>
        <position position="198"/>
    </location>
</feature>
<feature type="site" description="Important for efficient shutoff activity and nuclear localization" evidence="4">
    <location>
        <position position="199"/>
    </location>
</feature>
<feature type="site" description="Important for efficient shutoff activity" evidence="3">
    <location>
        <position position="202"/>
    </location>
</feature>
<feature type="site" description="Important for efficient shutoff activity" evidence="3">
    <location>
        <position position="203"/>
    </location>
</feature>
<feature type="site" description="Important for efficient shutoff activity" evidence="3">
    <location>
        <position position="206"/>
    </location>
</feature>
<dbReference type="EMBL" id="CY009209">
    <property type="status" value="NOT_ANNOTATED_CDS"/>
    <property type="molecule type" value="Genomic_RNA"/>
</dbReference>
<dbReference type="SMR" id="P0DJT6"/>
<dbReference type="Proteomes" id="UP001366552">
    <property type="component" value="Genome"/>
</dbReference>
<dbReference type="GO" id="GO:0003723">
    <property type="term" value="F:RNA binding"/>
    <property type="evidence" value="ECO:0007669"/>
    <property type="project" value="InterPro"/>
</dbReference>
<dbReference type="GO" id="GO:0039694">
    <property type="term" value="P:viral RNA genome replication"/>
    <property type="evidence" value="ECO:0007669"/>
    <property type="project" value="InterPro"/>
</dbReference>
<dbReference type="GO" id="GO:0075523">
    <property type="term" value="P:viral translational frameshifting"/>
    <property type="evidence" value="ECO:0007669"/>
    <property type="project" value="UniProtKB-KW"/>
</dbReference>
<dbReference type="FunFam" id="3.40.91.90:FF:000001">
    <property type="entry name" value="Polymerase acidic protein"/>
    <property type="match status" value="1"/>
</dbReference>
<dbReference type="Gene3D" id="3.40.91.90">
    <property type="entry name" value="Influenza RNA-dependent RNA polymerase subunit PA, endonuclease domain"/>
    <property type="match status" value="1"/>
</dbReference>
<dbReference type="InterPro" id="IPR001009">
    <property type="entry name" value="PA/PA-X"/>
</dbReference>
<dbReference type="InterPro" id="IPR038372">
    <property type="entry name" value="PA/PA-X_sf"/>
</dbReference>
<dbReference type="Pfam" id="PF00603">
    <property type="entry name" value="Flu_PA"/>
    <property type="match status" value="1"/>
</dbReference>
<name>PAX_I00A1</name>
<accession>P0DJT6</accession>
<organismHost>
    <name type="scientific">Aves</name>
    <dbReference type="NCBI Taxonomy" id="8782"/>
</organismHost>
<organismHost>
    <name type="scientific">Homo sapiens</name>
    <name type="common">Human</name>
    <dbReference type="NCBI Taxonomy" id="9606"/>
</organismHost>
<organismHost>
    <name type="scientific">Sus scrofa</name>
    <name type="common">Pig</name>
    <dbReference type="NCBI Taxonomy" id="9823"/>
</organismHost>